<comment type="function">
    <text evidence="1">Endonuclease that specifically degrades the RNA of RNA-DNA hybrids.</text>
</comment>
<comment type="catalytic activity">
    <reaction evidence="1">
        <text>Endonucleolytic cleavage to 5'-phosphomonoester.</text>
        <dbReference type="EC" id="3.1.26.4"/>
    </reaction>
</comment>
<comment type="cofactor">
    <cofactor evidence="1">
        <name>Mn(2+)</name>
        <dbReference type="ChEBI" id="CHEBI:29035"/>
    </cofactor>
    <cofactor evidence="1">
        <name>Mg(2+)</name>
        <dbReference type="ChEBI" id="CHEBI:18420"/>
    </cofactor>
    <text evidence="1">Manganese or magnesium. Binds 1 divalent metal ion per monomer in the absence of substrate. May bind a second metal ion after substrate binding.</text>
</comment>
<comment type="subcellular location">
    <subcellularLocation>
        <location evidence="1">Cytoplasm</location>
    </subcellularLocation>
</comment>
<comment type="similarity">
    <text evidence="1">Belongs to the RNase HII family.</text>
</comment>
<name>RNH2_PELPB</name>
<feature type="chain" id="PRO_1000091639" description="Ribonuclease HII">
    <location>
        <begin position="1"/>
        <end position="206"/>
    </location>
</feature>
<feature type="domain" description="RNase H type-2" evidence="2">
    <location>
        <begin position="14"/>
        <end position="206"/>
    </location>
</feature>
<feature type="binding site" evidence="1">
    <location>
        <position position="20"/>
    </location>
    <ligand>
        <name>a divalent metal cation</name>
        <dbReference type="ChEBI" id="CHEBI:60240"/>
    </ligand>
</feature>
<feature type="binding site" evidence="1">
    <location>
        <position position="21"/>
    </location>
    <ligand>
        <name>a divalent metal cation</name>
        <dbReference type="ChEBI" id="CHEBI:60240"/>
    </ligand>
</feature>
<feature type="binding site" evidence="1">
    <location>
        <position position="117"/>
    </location>
    <ligand>
        <name>a divalent metal cation</name>
        <dbReference type="ChEBI" id="CHEBI:60240"/>
    </ligand>
</feature>
<proteinExistence type="inferred from homology"/>
<evidence type="ECO:0000255" key="1">
    <source>
        <dbReference type="HAMAP-Rule" id="MF_00052"/>
    </source>
</evidence>
<evidence type="ECO:0000255" key="2">
    <source>
        <dbReference type="PROSITE-ProRule" id="PRU01319"/>
    </source>
</evidence>
<dbReference type="EC" id="3.1.26.4" evidence="1"/>
<dbReference type="EMBL" id="CP001110">
    <property type="protein sequence ID" value="ACF42377.1"/>
    <property type="molecule type" value="Genomic_DNA"/>
</dbReference>
<dbReference type="RefSeq" id="WP_012506875.1">
    <property type="nucleotide sequence ID" value="NC_011060.1"/>
</dbReference>
<dbReference type="SMR" id="B4SAK8"/>
<dbReference type="STRING" id="324925.Ppha_0018"/>
<dbReference type="KEGG" id="pph:Ppha_0018"/>
<dbReference type="eggNOG" id="COG0164">
    <property type="taxonomic scope" value="Bacteria"/>
</dbReference>
<dbReference type="HOGENOM" id="CLU_036532_3_2_10"/>
<dbReference type="OrthoDB" id="9803420at2"/>
<dbReference type="Proteomes" id="UP000002724">
    <property type="component" value="Chromosome"/>
</dbReference>
<dbReference type="GO" id="GO:0005737">
    <property type="term" value="C:cytoplasm"/>
    <property type="evidence" value="ECO:0007669"/>
    <property type="project" value="UniProtKB-SubCell"/>
</dbReference>
<dbReference type="GO" id="GO:0032299">
    <property type="term" value="C:ribonuclease H2 complex"/>
    <property type="evidence" value="ECO:0007669"/>
    <property type="project" value="TreeGrafter"/>
</dbReference>
<dbReference type="GO" id="GO:0030145">
    <property type="term" value="F:manganese ion binding"/>
    <property type="evidence" value="ECO:0007669"/>
    <property type="project" value="UniProtKB-UniRule"/>
</dbReference>
<dbReference type="GO" id="GO:0003723">
    <property type="term" value="F:RNA binding"/>
    <property type="evidence" value="ECO:0007669"/>
    <property type="project" value="InterPro"/>
</dbReference>
<dbReference type="GO" id="GO:0004523">
    <property type="term" value="F:RNA-DNA hybrid ribonuclease activity"/>
    <property type="evidence" value="ECO:0007669"/>
    <property type="project" value="UniProtKB-UniRule"/>
</dbReference>
<dbReference type="GO" id="GO:0043137">
    <property type="term" value="P:DNA replication, removal of RNA primer"/>
    <property type="evidence" value="ECO:0007669"/>
    <property type="project" value="TreeGrafter"/>
</dbReference>
<dbReference type="GO" id="GO:0006298">
    <property type="term" value="P:mismatch repair"/>
    <property type="evidence" value="ECO:0007669"/>
    <property type="project" value="TreeGrafter"/>
</dbReference>
<dbReference type="CDD" id="cd07182">
    <property type="entry name" value="RNase_HII_bacteria_HII_like"/>
    <property type="match status" value="1"/>
</dbReference>
<dbReference type="FunFam" id="3.30.420.10:FF:000006">
    <property type="entry name" value="Ribonuclease HII"/>
    <property type="match status" value="1"/>
</dbReference>
<dbReference type="Gene3D" id="3.30.420.10">
    <property type="entry name" value="Ribonuclease H-like superfamily/Ribonuclease H"/>
    <property type="match status" value="1"/>
</dbReference>
<dbReference type="HAMAP" id="MF_00052_B">
    <property type="entry name" value="RNase_HII_B"/>
    <property type="match status" value="1"/>
</dbReference>
<dbReference type="InterPro" id="IPR022898">
    <property type="entry name" value="RNase_HII"/>
</dbReference>
<dbReference type="InterPro" id="IPR001352">
    <property type="entry name" value="RNase_HII/HIII"/>
</dbReference>
<dbReference type="InterPro" id="IPR024567">
    <property type="entry name" value="RNase_HII/HIII_dom"/>
</dbReference>
<dbReference type="InterPro" id="IPR012337">
    <property type="entry name" value="RNaseH-like_sf"/>
</dbReference>
<dbReference type="InterPro" id="IPR036397">
    <property type="entry name" value="RNaseH_sf"/>
</dbReference>
<dbReference type="NCBIfam" id="NF000594">
    <property type="entry name" value="PRK00015.1-1"/>
    <property type="match status" value="1"/>
</dbReference>
<dbReference type="NCBIfam" id="NF000595">
    <property type="entry name" value="PRK00015.1-3"/>
    <property type="match status" value="1"/>
</dbReference>
<dbReference type="PANTHER" id="PTHR10954">
    <property type="entry name" value="RIBONUCLEASE H2 SUBUNIT A"/>
    <property type="match status" value="1"/>
</dbReference>
<dbReference type="PANTHER" id="PTHR10954:SF18">
    <property type="entry name" value="RIBONUCLEASE HII"/>
    <property type="match status" value="1"/>
</dbReference>
<dbReference type="Pfam" id="PF01351">
    <property type="entry name" value="RNase_HII"/>
    <property type="match status" value="1"/>
</dbReference>
<dbReference type="SUPFAM" id="SSF53098">
    <property type="entry name" value="Ribonuclease H-like"/>
    <property type="match status" value="1"/>
</dbReference>
<dbReference type="PROSITE" id="PS51975">
    <property type="entry name" value="RNASE_H_2"/>
    <property type="match status" value="1"/>
</dbReference>
<reference key="1">
    <citation type="submission" date="2008-06" db="EMBL/GenBank/DDBJ databases">
        <title>Complete sequence of Pelodictyon phaeoclathratiforme BU-1.</title>
        <authorList>
            <consortium name="US DOE Joint Genome Institute"/>
            <person name="Lucas S."/>
            <person name="Copeland A."/>
            <person name="Lapidus A."/>
            <person name="Glavina del Rio T."/>
            <person name="Dalin E."/>
            <person name="Tice H."/>
            <person name="Bruce D."/>
            <person name="Goodwin L."/>
            <person name="Pitluck S."/>
            <person name="Schmutz J."/>
            <person name="Larimer F."/>
            <person name="Land M."/>
            <person name="Hauser L."/>
            <person name="Kyrpides N."/>
            <person name="Mikhailova N."/>
            <person name="Liu Z."/>
            <person name="Li T."/>
            <person name="Zhao F."/>
            <person name="Overmann J."/>
            <person name="Bryant D.A."/>
            <person name="Richardson P."/>
        </authorList>
    </citation>
    <scope>NUCLEOTIDE SEQUENCE [LARGE SCALE GENOMIC DNA]</scope>
    <source>
        <strain>DSM 5477 / BU-1</strain>
    </source>
</reference>
<gene>
    <name evidence="1" type="primary">rnhB</name>
    <name type="ordered locus">Ppha_0018</name>
</gene>
<sequence length="206" mass="22926">MITDYEWPLWQTTALVCGIDEAGRGPLAGPVVAAAVIFPRWFRPVGTILERVNDSKKLSAAERELLAPAIRNAAAFWAVAEVDPETIDQINILQATMLAMNQAVAALPIQPELLLVDGNRFRTELPIPYETVVKGDSKVFSIAAASVLAKTHRDELMVAYASEYPQYGFERHVGYPTRAHVEAIRQHGRCPIHRQSFRLRQLGEKP</sequence>
<protein>
    <recommendedName>
        <fullName evidence="1">Ribonuclease HII</fullName>
        <shortName evidence="1">RNase HII</shortName>
        <ecNumber evidence="1">3.1.26.4</ecNumber>
    </recommendedName>
</protein>
<organism>
    <name type="scientific">Pelodictyon phaeoclathratiforme (strain DSM 5477 / BU-1)</name>
    <dbReference type="NCBI Taxonomy" id="324925"/>
    <lineage>
        <taxon>Bacteria</taxon>
        <taxon>Pseudomonadati</taxon>
        <taxon>Chlorobiota</taxon>
        <taxon>Chlorobiia</taxon>
        <taxon>Chlorobiales</taxon>
        <taxon>Chlorobiaceae</taxon>
        <taxon>Chlorobium/Pelodictyon group</taxon>
        <taxon>Pelodictyon</taxon>
    </lineage>
</organism>
<keyword id="KW-0963">Cytoplasm</keyword>
<keyword id="KW-0255">Endonuclease</keyword>
<keyword id="KW-0378">Hydrolase</keyword>
<keyword id="KW-0464">Manganese</keyword>
<keyword id="KW-0479">Metal-binding</keyword>
<keyword id="KW-0540">Nuclease</keyword>
<keyword id="KW-1185">Reference proteome</keyword>
<accession>B4SAK8</accession>